<keyword id="KW-0001">2Fe-2S</keyword>
<keyword id="KW-0004">4Fe-4S</keyword>
<keyword id="KW-0093">Biotin biosynthesis</keyword>
<keyword id="KW-0408">Iron</keyword>
<keyword id="KW-0411">Iron-sulfur</keyword>
<keyword id="KW-0479">Metal-binding</keyword>
<keyword id="KW-1185">Reference proteome</keyword>
<keyword id="KW-0949">S-adenosyl-L-methionine</keyword>
<keyword id="KW-0808">Transferase</keyword>
<sequence length="332" mass="36899">MKQVQTKRDWKKLAYDVVEEKMITKEDAIAILEADDTEVLEIMNAAYIIRHHHFGKKVKLNMIINTKSGLCPEDCGYCSQSIISEAPIDKYAWLTQEKIVEGAHEAIRRKAGTYCIVASGRRPTDKEVNHVIGAVKEIRETTDLKICCCLGFLNEDQAGRLAEAGVHRYNHNLDTHANNYDSICSTHTYDDRVDTVQKAKQAGISPCSGAIFGMGETIEERAEIAFELQRIDADSIPCNFLVAVKGTPLEGQKELTPVECLKVLAMMRFVNPTKEIRISGGREINLRSVQPIGLFAANSIFVGDYLTTAGQEPTADWGMIADLGFEIEECAL</sequence>
<feature type="chain" id="PRO_0000381225" description="Biotin synthase">
    <location>
        <begin position="1"/>
        <end position="332"/>
    </location>
</feature>
<feature type="domain" description="Radical SAM core" evidence="2">
    <location>
        <begin position="53"/>
        <end position="282"/>
    </location>
</feature>
<feature type="binding site" evidence="1">
    <location>
        <position position="71"/>
    </location>
    <ligand>
        <name>[4Fe-4S] cluster</name>
        <dbReference type="ChEBI" id="CHEBI:49883"/>
        <note>4Fe-4S-S-AdoMet</note>
    </ligand>
</feature>
<feature type="binding site" evidence="1">
    <location>
        <position position="75"/>
    </location>
    <ligand>
        <name>[4Fe-4S] cluster</name>
        <dbReference type="ChEBI" id="CHEBI:49883"/>
        <note>4Fe-4S-S-AdoMet</note>
    </ligand>
</feature>
<feature type="binding site" evidence="1">
    <location>
        <position position="78"/>
    </location>
    <ligand>
        <name>[4Fe-4S] cluster</name>
        <dbReference type="ChEBI" id="CHEBI:49883"/>
        <note>4Fe-4S-S-AdoMet</note>
    </ligand>
</feature>
<feature type="binding site" evidence="1">
    <location>
        <position position="115"/>
    </location>
    <ligand>
        <name>[2Fe-2S] cluster</name>
        <dbReference type="ChEBI" id="CHEBI:190135"/>
    </ligand>
</feature>
<feature type="binding site" evidence="1">
    <location>
        <position position="147"/>
    </location>
    <ligand>
        <name>[2Fe-2S] cluster</name>
        <dbReference type="ChEBI" id="CHEBI:190135"/>
    </ligand>
</feature>
<feature type="binding site" evidence="1">
    <location>
        <position position="207"/>
    </location>
    <ligand>
        <name>[2Fe-2S] cluster</name>
        <dbReference type="ChEBI" id="CHEBI:190135"/>
    </ligand>
</feature>
<feature type="binding site" evidence="1">
    <location>
        <position position="277"/>
    </location>
    <ligand>
        <name>[2Fe-2S] cluster</name>
        <dbReference type="ChEBI" id="CHEBI:190135"/>
    </ligand>
</feature>
<evidence type="ECO:0000255" key="1">
    <source>
        <dbReference type="HAMAP-Rule" id="MF_01694"/>
    </source>
</evidence>
<evidence type="ECO:0000255" key="2">
    <source>
        <dbReference type="PROSITE-ProRule" id="PRU01266"/>
    </source>
</evidence>
<proteinExistence type="inferred from homology"/>
<protein>
    <recommendedName>
        <fullName evidence="1">Biotin synthase</fullName>
        <ecNumber evidence="1">2.8.1.6</ecNumber>
    </recommendedName>
</protein>
<gene>
    <name evidence="1" type="primary">bioB</name>
    <name type="ordered locus">BC_4114</name>
</gene>
<dbReference type="EC" id="2.8.1.6" evidence="1"/>
<dbReference type="EMBL" id="AE016877">
    <property type="protein sequence ID" value="AAP11033.1"/>
    <property type="molecule type" value="Genomic_DNA"/>
</dbReference>
<dbReference type="RefSeq" id="NP_833832.1">
    <property type="nucleotide sequence ID" value="NC_004722.1"/>
</dbReference>
<dbReference type="RefSeq" id="WP_000815854.1">
    <property type="nucleotide sequence ID" value="NC_004722.1"/>
</dbReference>
<dbReference type="SMR" id="Q818X3"/>
<dbReference type="STRING" id="226900.BC_4114"/>
<dbReference type="KEGG" id="bce:BC4114"/>
<dbReference type="PATRIC" id="fig|226900.8.peg.4250"/>
<dbReference type="HOGENOM" id="CLU_033172_2_1_9"/>
<dbReference type="UniPathway" id="UPA00078">
    <property type="reaction ID" value="UER00162"/>
</dbReference>
<dbReference type="Proteomes" id="UP000001417">
    <property type="component" value="Chromosome"/>
</dbReference>
<dbReference type="GO" id="GO:0051537">
    <property type="term" value="F:2 iron, 2 sulfur cluster binding"/>
    <property type="evidence" value="ECO:0000318"/>
    <property type="project" value="GO_Central"/>
</dbReference>
<dbReference type="GO" id="GO:0051539">
    <property type="term" value="F:4 iron, 4 sulfur cluster binding"/>
    <property type="evidence" value="ECO:0007669"/>
    <property type="project" value="UniProtKB-KW"/>
</dbReference>
<dbReference type="GO" id="GO:0004076">
    <property type="term" value="F:biotin synthase activity"/>
    <property type="evidence" value="ECO:0000318"/>
    <property type="project" value="GO_Central"/>
</dbReference>
<dbReference type="GO" id="GO:0005506">
    <property type="term" value="F:iron ion binding"/>
    <property type="evidence" value="ECO:0007669"/>
    <property type="project" value="UniProtKB-UniRule"/>
</dbReference>
<dbReference type="GO" id="GO:0009102">
    <property type="term" value="P:biotin biosynthetic process"/>
    <property type="evidence" value="ECO:0000318"/>
    <property type="project" value="GO_Central"/>
</dbReference>
<dbReference type="CDD" id="cd01335">
    <property type="entry name" value="Radical_SAM"/>
    <property type="match status" value="1"/>
</dbReference>
<dbReference type="FunFam" id="3.20.20.70:FF:000026">
    <property type="entry name" value="Biotin synthase"/>
    <property type="match status" value="1"/>
</dbReference>
<dbReference type="Gene3D" id="3.20.20.70">
    <property type="entry name" value="Aldolase class I"/>
    <property type="match status" value="1"/>
</dbReference>
<dbReference type="HAMAP" id="MF_01694">
    <property type="entry name" value="BioB"/>
    <property type="match status" value="1"/>
</dbReference>
<dbReference type="InterPro" id="IPR013785">
    <property type="entry name" value="Aldolase_TIM"/>
</dbReference>
<dbReference type="InterPro" id="IPR010722">
    <property type="entry name" value="BATS_dom"/>
</dbReference>
<dbReference type="InterPro" id="IPR002684">
    <property type="entry name" value="Biotin_synth/BioAB"/>
</dbReference>
<dbReference type="InterPro" id="IPR024177">
    <property type="entry name" value="Biotin_synthase"/>
</dbReference>
<dbReference type="InterPro" id="IPR006638">
    <property type="entry name" value="Elp3/MiaA/NifB-like_rSAM"/>
</dbReference>
<dbReference type="InterPro" id="IPR007197">
    <property type="entry name" value="rSAM"/>
</dbReference>
<dbReference type="NCBIfam" id="TIGR00433">
    <property type="entry name" value="bioB"/>
    <property type="match status" value="1"/>
</dbReference>
<dbReference type="PANTHER" id="PTHR22976">
    <property type="entry name" value="BIOTIN SYNTHASE"/>
    <property type="match status" value="1"/>
</dbReference>
<dbReference type="PANTHER" id="PTHR22976:SF2">
    <property type="entry name" value="BIOTIN SYNTHASE, MITOCHONDRIAL"/>
    <property type="match status" value="1"/>
</dbReference>
<dbReference type="Pfam" id="PF06968">
    <property type="entry name" value="BATS"/>
    <property type="match status" value="1"/>
</dbReference>
<dbReference type="Pfam" id="PF04055">
    <property type="entry name" value="Radical_SAM"/>
    <property type="match status" value="1"/>
</dbReference>
<dbReference type="PIRSF" id="PIRSF001619">
    <property type="entry name" value="Biotin_synth"/>
    <property type="match status" value="1"/>
</dbReference>
<dbReference type="SFLD" id="SFLDG01278">
    <property type="entry name" value="biotin_synthase_like"/>
    <property type="match status" value="1"/>
</dbReference>
<dbReference type="SFLD" id="SFLDS00029">
    <property type="entry name" value="Radical_SAM"/>
    <property type="match status" value="1"/>
</dbReference>
<dbReference type="SMART" id="SM00876">
    <property type="entry name" value="BATS"/>
    <property type="match status" value="1"/>
</dbReference>
<dbReference type="SMART" id="SM00729">
    <property type="entry name" value="Elp3"/>
    <property type="match status" value="1"/>
</dbReference>
<dbReference type="SUPFAM" id="SSF102114">
    <property type="entry name" value="Radical SAM enzymes"/>
    <property type="match status" value="1"/>
</dbReference>
<dbReference type="PROSITE" id="PS51918">
    <property type="entry name" value="RADICAL_SAM"/>
    <property type="match status" value="1"/>
</dbReference>
<name>BIOB_BACCR</name>
<organism>
    <name type="scientific">Bacillus cereus (strain ATCC 14579 / DSM 31 / CCUG 7414 / JCM 2152 / NBRC 15305 / NCIMB 9373 / NCTC 2599 / NRRL B-3711)</name>
    <dbReference type="NCBI Taxonomy" id="226900"/>
    <lineage>
        <taxon>Bacteria</taxon>
        <taxon>Bacillati</taxon>
        <taxon>Bacillota</taxon>
        <taxon>Bacilli</taxon>
        <taxon>Bacillales</taxon>
        <taxon>Bacillaceae</taxon>
        <taxon>Bacillus</taxon>
        <taxon>Bacillus cereus group</taxon>
    </lineage>
</organism>
<accession>Q818X3</accession>
<comment type="function">
    <text evidence="1">Catalyzes the conversion of dethiobiotin (DTB) to biotin by the insertion of a sulfur atom into dethiobiotin via a radical-based mechanism.</text>
</comment>
<comment type="catalytic activity">
    <reaction evidence="1">
        <text>(4R,5S)-dethiobiotin + (sulfur carrier)-SH + 2 reduced [2Fe-2S]-[ferredoxin] + 2 S-adenosyl-L-methionine = (sulfur carrier)-H + biotin + 2 5'-deoxyadenosine + 2 L-methionine + 2 oxidized [2Fe-2S]-[ferredoxin]</text>
        <dbReference type="Rhea" id="RHEA:22060"/>
        <dbReference type="Rhea" id="RHEA-COMP:10000"/>
        <dbReference type="Rhea" id="RHEA-COMP:10001"/>
        <dbReference type="Rhea" id="RHEA-COMP:14737"/>
        <dbReference type="Rhea" id="RHEA-COMP:14739"/>
        <dbReference type="ChEBI" id="CHEBI:17319"/>
        <dbReference type="ChEBI" id="CHEBI:29917"/>
        <dbReference type="ChEBI" id="CHEBI:33737"/>
        <dbReference type="ChEBI" id="CHEBI:33738"/>
        <dbReference type="ChEBI" id="CHEBI:57586"/>
        <dbReference type="ChEBI" id="CHEBI:57844"/>
        <dbReference type="ChEBI" id="CHEBI:59789"/>
        <dbReference type="ChEBI" id="CHEBI:64428"/>
        <dbReference type="ChEBI" id="CHEBI:149473"/>
        <dbReference type="EC" id="2.8.1.6"/>
    </reaction>
</comment>
<comment type="cofactor">
    <cofactor evidence="1">
        <name>[4Fe-4S] cluster</name>
        <dbReference type="ChEBI" id="CHEBI:49883"/>
    </cofactor>
    <text evidence="1">Binds 1 [4Fe-4S] cluster. The cluster is coordinated with 3 cysteines and an exchangeable S-adenosyl-L-methionine.</text>
</comment>
<comment type="cofactor">
    <cofactor evidence="1">
        <name>[2Fe-2S] cluster</name>
        <dbReference type="ChEBI" id="CHEBI:190135"/>
    </cofactor>
    <text evidence="1">Binds 1 [2Fe-2S] cluster. The cluster is coordinated with 3 cysteines and 1 arginine.</text>
</comment>
<comment type="pathway">
    <text evidence="1">Cofactor biosynthesis; biotin biosynthesis; biotin from 7,8-diaminononanoate: step 2/2.</text>
</comment>
<comment type="subunit">
    <text evidence="1">Homodimer.</text>
</comment>
<comment type="similarity">
    <text evidence="1">Belongs to the radical SAM superfamily. Biotin synthase family.</text>
</comment>
<reference key="1">
    <citation type="journal article" date="2003" name="Nature">
        <title>Genome sequence of Bacillus cereus and comparative analysis with Bacillus anthracis.</title>
        <authorList>
            <person name="Ivanova N."/>
            <person name="Sorokin A."/>
            <person name="Anderson I."/>
            <person name="Galleron N."/>
            <person name="Candelon B."/>
            <person name="Kapatral V."/>
            <person name="Bhattacharyya A."/>
            <person name="Reznik G."/>
            <person name="Mikhailova N."/>
            <person name="Lapidus A."/>
            <person name="Chu L."/>
            <person name="Mazur M."/>
            <person name="Goltsman E."/>
            <person name="Larsen N."/>
            <person name="D'Souza M."/>
            <person name="Walunas T."/>
            <person name="Grechkin Y."/>
            <person name="Pusch G."/>
            <person name="Haselkorn R."/>
            <person name="Fonstein M."/>
            <person name="Ehrlich S.D."/>
            <person name="Overbeek R."/>
            <person name="Kyrpides N.C."/>
        </authorList>
    </citation>
    <scope>NUCLEOTIDE SEQUENCE [LARGE SCALE GENOMIC DNA]</scope>
    <source>
        <strain>ATCC 14579 / DSM 31 / CCUG 7414 / JCM 2152 / NBRC 15305 / NCIMB 9373 / NCTC 2599 / NRRL B-3711</strain>
    </source>
</reference>